<dbReference type="EC" id="2.7.8.7" evidence="1"/>
<dbReference type="EMBL" id="CP000961">
    <property type="protein sequence ID" value="ACA85539.1"/>
    <property type="molecule type" value="Genomic_DNA"/>
</dbReference>
<dbReference type="RefSeq" id="WP_012323885.1">
    <property type="nucleotide sequence ID" value="NC_010506.1"/>
</dbReference>
<dbReference type="SMR" id="B1KI61"/>
<dbReference type="STRING" id="392500.Swoo_1247"/>
<dbReference type="KEGG" id="swd:Swoo_1247"/>
<dbReference type="eggNOG" id="COG0736">
    <property type="taxonomic scope" value="Bacteria"/>
</dbReference>
<dbReference type="HOGENOM" id="CLU_089696_3_1_6"/>
<dbReference type="Proteomes" id="UP000002168">
    <property type="component" value="Chromosome"/>
</dbReference>
<dbReference type="GO" id="GO:0005737">
    <property type="term" value="C:cytoplasm"/>
    <property type="evidence" value="ECO:0007669"/>
    <property type="project" value="UniProtKB-SubCell"/>
</dbReference>
<dbReference type="GO" id="GO:0008897">
    <property type="term" value="F:holo-[acyl-carrier-protein] synthase activity"/>
    <property type="evidence" value="ECO:0007669"/>
    <property type="project" value="UniProtKB-UniRule"/>
</dbReference>
<dbReference type="GO" id="GO:0000287">
    <property type="term" value="F:magnesium ion binding"/>
    <property type="evidence" value="ECO:0007669"/>
    <property type="project" value="UniProtKB-UniRule"/>
</dbReference>
<dbReference type="GO" id="GO:0006633">
    <property type="term" value="P:fatty acid biosynthetic process"/>
    <property type="evidence" value="ECO:0007669"/>
    <property type="project" value="UniProtKB-UniRule"/>
</dbReference>
<dbReference type="FunFam" id="3.90.470.20:FF:000001">
    <property type="entry name" value="Holo-[acyl-carrier-protein] synthase"/>
    <property type="match status" value="1"/>
</dbReference>
<dbReference type="Gene3D" id="3.90.470.20">
    <property type="entry name" value="4'-phosphopantetheinyl transferase domain"/>
    <property type="match status" value="1"/>
</dbReference>
<dbReference type="HAMAP" id="MF_00101">
    <property type="entry name" value="AcpS"/>
    <property type="match status" value="1"/>
</dbReference>
<dbReference type="InterPro" id="IPR008278">
    <property type="entry name" value="4-PPantetheinyl_Trfase_dom"/>
</dbReference>
<dbReference type="InterPro" id="IPR037143">
    <property type="entry name" value="4-PPantetheinyl_Trfase_dom_sf"/>
</dbReference>
<dbReference type="InterPro" id="IPR002582">
    <property type="entry name" value="ACPS"/>
</dbReference>
<dbReference type="InterPro" id="IPR004568">
    <property type="entry name" value="Ppantetheine-prot_Trfase_dom"/>
</dbReference>
<dbReference type="NCBIfam" id="TIGR00516">
    <property type="entry name" value="acpS"/>
    <property type="match status" value="1"/>
</dbReference>
<dbReference type="NCBIfam" id="TIGR00556">
    <property type="entry name" value="pantethn_trn"/>
    <property type="match status" value="1"/>
</dbReference>
<dbReference type="Pfam" id="PF01648">
    <property type="entry name" value="ACPS"/>
    <property type="match status" value="1"/>
</dbReference>
<dbReference type="SUPFAM" id="SSF56214">
    <property type="entry name" value="4'-phosphopantetheinyl transferase"/>
    <property type="match status" value="1"/>
</dbReference>
<evidence type="ECO:0000255" key="1">
    <source>
        <dbReference type="HAMAP-Rule" id="MF_00101"/>
    </source>
</evidence>
<sequence length="132" mass="13858">MIVGLGTDIAEIERIEQKVPAAGDIKGLESCRLAKRVLTEPEMAIFIASKQPARYLAKRFAAKEAAAKALGTGIGRGVSFQHIEISNDTNGAPLISFNGGAADRLASLGGARAHISIADEKHYATATVILES</sequence>
<proteinExistence type="inferred from homology"/>
<protein>
    <recommendedName>
        <fullName evidence="1">Holo-[acyl-carrier-protein] synthase</fullName>
        <shortName evidence="1">Holo-ACP synthase</shortName>
        <ecNumber evidence="1">2.7.8.7</ecNumber>
    </recommendedName>
    <alternativeName>
        <fullName evidence="1">4'-phosphopantetheinyl transferase AcpS</fullName>
    </alternativeName>
</protein>
<gene>
    <name evidence="1" type="primary">acpS</name>
    <name type="ordered locus">Swoo_1247</name>
</gene>
<name>ACPS_SHEWM</name>
<keyword id="KW-0963">Cytoplasm</keyword>
<keyword id="KW-0275">Fatty acid biosynthesis</keyword>
<keyword id="KW-0276">Fatty acid metabolism</keyword>
<keyword id="KW-0444">Lipid biosynthesis</keyword>
<keyword id="KW-0443">Lipid metabolism</keyword>
<keyword id="KW-0460">Magnesium</keyword>
<keyword id="KW-0479">Metal-binding</keyword>
<keyword id="KW-1185">Reference proteome</keyword>
<keyword id="KW-0808">Transferase</keyword>
<comment type="function">
    <text evidence="1">Transfers the 4'-phosphopantetheine moiety from coenzyme A to a Ser of acyl-carrier-protein.</text>
</comment>
<comment type="catalytic activity">
    <reaction evidence="1">
        <text>apo-[ACP] + CoA = holo-[ACP] + adenosine 3',5'-bisphosphate + H(+)</text>
        <dbReference type="Rhea" id="RHEA:12068"/>
        <dbReference type="Rhea" id="RHEA-COMP:9685"/>
        <dbReference type="Rhea" id="RHEA-COMP:9690"/>
        <dbReference type="ChEBI" id="CHEBI:15378"/>
        <dbReference type="ChEBI" id="CHEBI:29999"/>
        <dbReference type="ChEBI" id="CHEBI:57287"/>
        <dbReference type="ChEBI" id="CHEBI:58343"/>
        <dbReference type="ChEBI" id="CHEBI:64479"/>
        <dbReference type="EC" id="2.7.8.7"/>
    </reaction>
</comment>
<comment type="cofactor">
    <cofactor evidence="1">
        <name>Mg(2+)</name>
        <dbReference type="ChEBI" id="CHEBI:18420"/>
    </cofactor>
</comment>
<comment type="subcellular location">
    <subcellularLocation>
        <location evidence="1">Cytoplasm</location>
    </subcellularLocation>
</comment>
<comment type="similarity">
    <text evidence="1">Belongs to the P-Pant transferase superfamily. AcpS family.</text>
</comment>
<feature type="chain" id="PRO_1000093918" description="Holo-[acyl-carrier-protein] synthase">
    <location>
        <begin position="1"/>
        <end position="132"/>
    </location>
</feature>
<feature type="binding site" evidence="1">
    <location>
        <position position="8"/>
    </location>
    <ligand>
        <name>Mg(2+)</name>
        <dbReference type="ChEBI" id="CHEBI:18420"/>
    </ligand>
</feature>
<feature type="binding site" evidence="1">
    <location>
        <position position="64"/>
    </location>
    <ligand>
        <name>Mg(2+)</name>
        <dbReference type="ChEBI" id="CHEBI:18420"/>
    </ligand>
</feature>
<accession>B1KI61</accession>
<reference key="1">
    <citation type="submission" date="2008-02" db="EMBL/GenBank/DDBJ databases">
        <title>Complete sequence of Shewanella woodyi ATCC 51908.</title>
        <authorList>
            <consortium name="US DOE Joint Genome Institute"/>
            <person name="Copeland A."/>
            <person name="Lucas S."/>
            <person name="Lapidus A."/>
            <person name="Glavina del Rio T."/>
            <person name="Dalin E."/>
            <person name="Tice H."/>
            <person name="Bruce D."/>
            <person name="Goodwin L."/>
            <person name="Pitluck S."/>
            <person name="Sims D."/>
            <person name="Brettin T."/>
            <person name="Detter J.C."/>
            <person name="Han C."/>
            <person name="Kuske C.R."/>
            <person name="Schmutz J."/>
            <person name="Larimer F."/>
            <person name="Land M."/>
            <person name="Hauser L."/>
            <person name="Kyrpides N."/>
            <person name="Lykidis A."/>
            <person name="Zhao J.-S."/>
            <person name="Richardson P."/>
        </authorList>
    </citation>
    <scope>NUCLEOTIDE SEQUENCE [LARGE SCALE GENOMIC DNA]</scope>
    <source>
        <strain>ATCC 51908 / MS32</strain>
    </source>
</reference>
<organism>
    <name type="scientific">Shewanella woodyi (strain ATCC 51908 / MS32)</name>
    <dbReference type="NCBI Taxonomy" id="392500"/>
    <lineage>
        <taxon>Bacteria</taxon>
        <taxon>Pseudomonadati</taxon>
        <taxon>Pseudomonadota</taxon>
        <taxon>Gammaproteobacteria</taxon>
        <taxon>Alteromonadales</taxon>
        <taxon>Shewanellaceae</taxon>
        <taxon>Shewanella</taxon>
    </lineage>
</organism>